<dbReference type="EC" id="2.8.1.13" evidence="1"/>
<dbReference type="EMBL" id="CP000049">
    <property type="protein sequence ID" value="AAX17999.1"/>
    <property type="molecule type" value="Genomic_DNA"/>
</dbReference>
<dbReference type="RefSeq" id="WP_011772617.1">
    <property type="nucleotide sequence ID" value="NC_008710.1"/>
</dbReference>
<dbReference type="SMR" id="A1R0A7"/>
<dbReference type="KEGG" id="btu:BT0682"/>
<dbReference type="eggNOG" id="COG0482">
    <property type="taxonomic scope" value="Bacteria"/>
</dbReference>
<dbReference type="HOGENOM" id="CLU_035188_1_2_12"/>
<dbReference type="Proteomes" id="UP000001205">
    <property type="component" value="Chromosome"/>
</dbReference>
<dbReference type="GO" id="GO:0005737">
    <property type="term" value="C:cytoplasm"/>
    <property type="evidence" value="ECO:0007669"/>
    <property type="project" value="UniProtKB-SubCell"/>
</dbReference>
<dbReference type="GO" id="GO:0005524">
    <property type="term" value="F:ATP binding"/>
    <property type="evidence" value="ECO:0007669"/>
    <property type="project" value="UniProtKB-KW"/>
</dbReference>
<dbReference type="GO" id="GO:0000049">
    <property type="term" value="F:tRNA binding"/>
    <property type="evidence" value="ECO:0007669"/>
    <property type="project" value="UniProtKB-KW"/>
</dbReference>
<dbReference type="GO" id="GO:0103016">
    <property type="term" value="F:tRNA-uridine 2-sulfurtransferase activity"/>
    <property type="evidence" value="ECO:0007669"/>
    <property type="project" value="UniProtKB-EC"/>
</dbReference>
<dbReference type="GO" id="GO:0006400">
    <property type="term" value="P:tRNA modification"/>
    <property type="evidence" value="ECO:0007669"/>
    <property type="project" value="UniProtKB-UniRule"/>
</dbReference>
<dbReference type="CDD" id="cd01998">
    <property type="entry name" value="MnmA_TRMU-like"/>
    <property type="match status" value="1"/>
</dbReference>
<dbReference type="FunFam" id="2.30.30.280:FF:000001">
    <property type="entry name" value="tRNA-specific 2-thiouridylase MnmA"/>
    <property type="match status" value="1"/>
</dbReference>
<dbReference type="Gene3D" id="2.30.30.280">
    <property type="entry name" value="Adenine nucleotide alpha hydrolases-like domains"/>
    <property type="match status" value="1"/>
</dbReference>
<dbReference type="Gene3D" id="3.40.50.620">
    <property type="entry name" value="HUPs"/>
    <property type="match status" value="1"/>
</dbReference>
<dbReference type="Gene3D" id="2.40.30.10">
    <property type="entry name" value="Translation factors"/>
    <property type="match status" value="1"/>
</dbReference>
<dbReference type="HAMAP" id="MF_00144">
    <property type="entry name" value="tRNA_thiouridyl_MnmA"/>
    <property type="match status" value="1"/>
</dbReference>
<dbReference type="InterPro" id="IPR004506">
    <property type="entry name" value="MnmA-like"/>
</dbReference>
<dbReference type="InterPro" id="IPR046885">
    <property type="entry name" value="MnmA-like_C"/>
</dbReference>
<dbReference type="InterPro" id="IPR046884">
    <property type="entry name" value="MnmA-like_central"/>
</dbReference>
<dbReference type="InterPro" id="IPR023382">
    <property type="entry name" value="MnmA-like_central_sf"/>
</dbReference>
<dbReference type="InterPro" id="IPR014729">
    <property type="entry name" value="Rossmann-like_a/b/a_fold"/>
</dbReference>
<dbReference type="InterPro" id="IPR051305">
    <property type="entry name" value="tRNA_2-thiouridylase_MnmA"/>
</dbReference>
<dbReference type="NCBIfam" id="NF001138">
    <property type="entry name" value="PRK00143.1"/>
    <property type="match status" value="1"/>
</dbReference>
<dbReference type="NCBIfam" id="TIGR00420">
    <property type="entry name" value="trmU"/>
    <property type="match status" value="1"/>
</dbReference>
<dbReference type="PANTHER" id="PTHR43052">
    <property type="match status" value="1"/>
</dbReference>
<dbReference type="PANTHER" id="PTHR43052:SF1">
    <property type="entry name" value="TRNA-5-TAURINOMETHYLURIDINE 2-SULFURTRANSFERASE"/>
    <property type="match status" value="1"/>
</dbReference>
<dbReference type="Pfam" id="PF03054">
    <property type="entry name" value="tRNA_Me_trans"/>
    <property type="match status" value="1"/>
</dbReference>
<dbReference type="Pfam" id="PF20258">
    <property type="entry name" value="tRNA_Me_trans_C"/>
    <property type="match status" value="1"/>
</dbReference>
<dbReference type="Pfam" id="PF20259">
    <property type="entry name" value="tRNA_Me_trans_M"/>
    <property type="match status" value="1"/>
</dbReference>
<dbReference type="SUPFAM" id="SSF52402">
    <property type="entry name" value="Adenine nucleotide alpha hydrolases-like"/>
    <property type="match status" value="1"/>
</dbReference>
<sequence length="354" mass="41202">MQIAVLLSGGVDSSVALYIMIQKGYKNIKCYYLKIWLEDELSYIGECPWKEDINYVEAVCKKFNVPYEIISLQDEYYKRVVTYAIEELKIGNTPSPDIFCNQRIKFGAFFDKINEHYDLIVTGHYAKIENKNDHYILKQAKDKIKDQSYFLSHLSRKQISKLHFPLGDLLKTEIRQIAQKIDLPNKNRKDSQGICFLGKIKYDEFIKYHLGELKGNIIEQETGKILGTHNGYWFFTIGQRKGIKLSHGPWFVTEKDIQNNIIYISNSINYLKQGKQQFLVHKTNWINKPLNNGDLSAKIRHGEKKIKCKIEMLKNDIIKVDLEEKDYGISPGQFCIFYQEDECLGGAKILKTLT</sequence>
<proteinExistence type="inferred from homology"/>
<keyword id="KW-0067">ATP-binding</keyword>
<keyword id="KW-0963">Cytoplasm</keyword>
<keyword id="KW-1015">Disulfide bond</keyword>
<keyword id="KW-0547">Nucleotide-binding</keyword>
<keyword id="KW-1185">Reference proteome</keyword>
<keyword id="KW-0694">RNA-binding</keyword>
<keyword id="KW-0808">Transferase</keyword>
<keyword id="KW-0819">tRNA processing</keyword>
<keyword id="KW-0820">tRNA-binding</keyword>
<comment type="function">
    <text evidence="1">Catalyzes the 2-thiolation of uridine at the wobble position (U34) of tRNA, leading to the formation of s(2)U34.</text>
</comment>
<comment type="catalytic activity">
    <reaction evidence="1">
        <text>S-sulfanyl-L-cysteinyl-[protein] + uridine(34) in tRNA + AH2 + ATP = 2-thiouridine(34) in tRNA + L-cysteinyl-[protein] + A + AMP + diphosphate + H(+)</text>
        <dbReference type="Rhea" id="RHEA:47032"/>
        <dbReference type="Rhea" id="RHEA-COMP:10131"/>
        <dbReference type="Rhea" id="RHEA-COMP:11726"/>
        <dbReference type="Rhea" id="RHEA-COMP:11727"/>
        <dbReference type="Rhea" id="RHEA-COMP:11728"/>
        <dbReference type="ChEBI" id="CHEBI:13193"/>
        <dbReference type="ChEBI" id="CHEBI:15378"/>
        <dbReference type="ChEBI" id="CHEBI:17499"/>
        <dbReference type="ChEBI" id="CHEBI:29950"/>
        <dbReference type="ChEBI" id="CHEBI:30616"/>
        <dbReference type="ChEBI" id="CHEBI:33019"/>
        <dbReference type="ChEBI" id="CHEBI:61963"/>
        <dbReference type="ChEBI" id="CHEBI:65315"/>
        <dbReference type="ChEBI" id="CHEBI:87170"/>
        <dbReference type="ChEBI" id="CHEBI:456215"/>
        <dbReference type="EC" id="2.8.1.13"/>
    </reaction>
</comment>
<comment type="subcellular location">
    <subcellularLocation>
        <location evidence="1">Cytoplasm</location>
    </subcellularLocation>
</comment>
<comment type="similarity">
    <text evidence="1">Belongs to the MnmA/TRMU family.</text>
</comment>
<protein>
    <recommendedName>
        <fullName evidence="1">tRNA-specific 2-thiouridylase MnmA</fullName>
        <ecNumber evidence="1">2.8.1.13</ecNumber>
    </recommendedName>
</protein>
<reference key="1">
    <citation type="submission" date="2004-12" db="EMBL/GenBank/DDBJ databases">
        <title>The genome sequence of Borrelia hermsii and Borrelia turicatae: comparative analysis of two agents of endemic N. America relapsing fever.</title>
        <authorList>
            <person name="Porcella S.F."/>
            <person name="Raffel S.J."/>
            <person name="Schrumpf M.E."/>
            <person name="Montgomery B."/>
            <person name="Smith T."/>
            <person name="Schwan T.G."/>
        </authorList>
    </citation>
    <scope>NUCLEOTIDE SEQUENCE [LARGE SCALE GENOMIC DNA]</scope>
    <source>
        <strain>91E135</strain>
    </source>
</reference>
<evidence type="ECO:0000255" key="1">
    <source>
        <dbReference type="HAMAP-Rule" id="MF_00144"/>
    </source>
</evidence>
<feature type="chain" id="PRO_1000198602" description="tRNA-specific 2-thiouridylase MnmA">
    <location>
        <begin position="1"/>
        <end position="354"/>
    </location>
</feature>
<feature type="region of interest" description="Interaction with tRNA" evidence="1">
    <location>
        <begin position="145"/>
        <end position="147"/>
    </location>
</feature>
<feature type="active site" description="Nucleophile" evidence="1">
    <location>
        <position position="100"/>
    </location>
</feature>
<feature type="active site" description="Cysteine persulfide intermediate" evidence="1">
    <location>
        <position position="195"/>
    </location>
</feature>
<feature type="binding site" evidence="1">
    <location>
        <begin position="6"/>
        <end position="13"/>
    </location>
    <ligand>
        <name>ATP</name>
        <dbReference type="ChEBI" id="CHEBI:30616"/>
    </ligand>
</feature>
<feature type="binding site" evidence="1">
    <location>
        <position position="33"/>
    </location>
    <ligand>
        <name>ATP</name>
        <dbReference type="ChEBI" id="CHEBI:30616"/>
    </ligand>
</feature>
<feature type="binding site" evidence="1">
    <location>
        <position position="123"/>
    </location>
    <ligand>
        <name>ATP</name>
        <dbReference type="ChEBI" id="CHEBI:30616"/>
    </ligand>
</feature>
<feature type="site" description="Interaction with tRNA" evidence="1">
    <location>
        <position position="124"/>
    </location>
</feature>
<feature type="site" description="Interaction with tRNA" evidence="1">
    <location>
        <position position="333"/>
    </location>
</feature>
<feature type="disulfide bond" description="Alternate" evidence="1">
    <location>
        <begin position="100"/>
        <end position="195"/>
    </location>
</feature>
<accession>A1R0A7</accession>
<name>MNMA_BORT9</name>
<gene>
    <name evidence="1" type="primary">mnmA</name>
    <name type="ordered locus">BT0682</name>
</gene>
<organism>
    <name type="scientific">Borrelia turicatae (strain 91E135)</name>
    <dbReference type="NCBI Taxonomy" id="314724"/>
    <lineage>
        <taxon>Bacteria</taxon>
        <taxon>Pseudomonadati</taxon>
        <taxon>Spirochaetota</taxon>
        <taxon>Spirochaetia</taxon>
        <taxon>Spirochaetales</taxon>
        <taxon>Borreliaceae</taxon>
        <taxon>Borrelia</taxon>
    </lineage>
</organism>